<gene>
    <name evidence="1" type="primary">rpsD</name>
    <name type="ordered locus">SPN23F00970</name>
</gene>
<name>RS4_STRPJ</name>
<reference key="1">
    <citation type="journal article" date="2009" name="J. Bacteriol.">
        <title>Role of conjugative elements in the evolution of the multidrug-resistant pandemic clone Streptococcus pneumoniae Spain23F ST81.</title>
        <authorList>
            <person name="Croucher N.J."/>
            <person name="Walker D."/>
            <person name="Romero P."/>
            <person name="Lennard N."/>
            <person name="Paterson G.K."/>
            <person name="Bason N.C."/>
            <person name="Mitchell A.M."/>
            <person name="Quail M.A."/>
            <person name="Andrew P.W."/>
            <person name="Parkhill J."/>
            <person name="Bentley S.D."/>
            <person name="Mitchell T.J."/>
        </authorList>
    </citation>
    <scope>NUCLEOTIDE SEQUENCE [LARGE SCALE GENOMIC DNA]</scope>
    <source>
        <strain>ATCC 700669 / Spain 23F-1</strain>
    </source>
</reference>
<sequence length="203" mass="23029">MSRYTGPSWKQARRLGLSLTGTGKELARRNYVPGQHGPNNRSKLSEYGLQLAEKQKLRFTYGVGEKQFRNLFVQATKIKGGILGFNFMLLLERRLDNVVYRLGLATTRRQARQFVNHGHILVDGKRVDIPSYRVTPGQVISVREKSLKVPAILEAVEATLGRPAFVSFDAEKLEGSLTRLPERDEINPEINEALVVEFYNKML</sequence>
<proteinExistence type="inferred from homology"/>
<comment type="function">
    <text evidence="1">One of the primary rRNA binding proteins, it binds directly to 16S rRNA where it nucleates assembly of the body of the 30S subunit.</text>
</comment>
<comment type="function">
    <text evidence="1">With S5 and S12 plays an important role in translational accuracy.</text>
</comment>
<comment type="subunit">
    <text evidence="1">Part of the 30S ribosomal subunit. Contacts protein S5. The interaction surface between S4 and S5 is involved in control of translational fidelity.</text>
</comment>
<comment type="similarity">
    <text evidence="1">Belongs to the universal ribosomal protein uS4 family.</text>
</comment>
<accession>B8ZJX3</accession>
<feature type="chain" id="PRO_1000165427" description="Small ribosomal subunit protein uS4">
    <location>
        <begin position="1"/>
        <end position="203"/>
    </location>
</feature>
<feature type="domain" description="S4 RNA-binding" evidence="1">
    <location>
        <begin position="93"/>
        <end position="156"/>
    </location>
</feature>
<organism>
    <name type="scientific">Streptococcus pneumoniae (strain ATCC 700669 / Spain 23F-1)</name>
    <dbReference type="NCBI Taxonomy" id="561276"/>
    <lineage>
        <taxon>Bacteria</taxon>
        <taxon>Bacillati</taxon>
        <taxon>Bacillota</taxon>
        <taxon>Bacilli</taxon>
        <taxon>Lactobacillales</taxon>
        <taxon>Streptococcaceae</taxon>
        <taxon>Streptococcus</taxon>
    </lineage>
</organism>
<dbReference type="EMBL" id="FM211187">
    <property type="protein sequence ID" value="CAR67956.1"/>
    <property type="molecule type" value="Genomic_DNA"/>
</dbReference>
<dbReference type="RefSeq" id="WP_000092756.1">
    <property type="nucleotide sequence ID" value="NC_011900.1"/>
</dbReference>
<dbReference type="SMR" id="B8ZJX3"/>
<dbReference type="GeneID" id="93738707"/>
<dbReference type="KEGG" id="sne:SPN23F00970"/>
<dbReference type="HOGENOM" id="CLU_092403_0_1_9"/>
<dbReference type="GO" id="GO:0015935">
    <property type="term" value="C:small ribosomal subunit"/>
    <property type="evidence" value="ECO:0007669"/>
    <property type="project" value="InterPro"/>
</dbReference>
<dbReference type="GO" id="GO:0019843">
    <property type="term" value="F:rRNA binding"/>
    <property type="evidence" value="ECO:0007669"/>
    <property type="project" value="UniProtKB-UniRule"/>
</dbReference>
<dbReference type="GO" id="GO:0003735">
    <property type="term" value="F:structural constituent of ribosome"/>
    <property type="evidence" value="ECO:0007669"/>
    <property type="project" value="InterPro"/>
</dbReference>
<dbReference type="GO" id="GO:0042274">
    <property type="term" value="P:ribosomal small subunit biogenesis"/>
    <property type="evidence" value="ECO:0007669"/>
    <property type="project" value="TreeGrafter"/>
</dbReference>
<dbReference type="GO" id="GO:0006412">
    <property type="term" value="P:translation"/>
    <property type="evidence" value="ECO:0007669"/>
    <property type="project" value="UniProtKB-UniRule"/>
</dbReference>
<dbReference type="CDD" id="cd00165">
    <property type="entry name" value="S4"/>
    <property type="match status" value="1"/>
</dbReference>
<dbReference type="FunFam" id="1.10.1050.10:FF:000001">
    <property type="entry name" value="30S ribosomal protein S4"/>
    <property type="match status" value="1"/>
</dbReference>
<dbReference type="FunFam" id="3.10.290.10:FF:000001">
    <property type="entry name" value="30S ribosomal protein S4"/>
    <property type="match status" value="1"/>
</dbReference>
<dbReference type="Gene3D" id="1.10.1050.10">
    <property type="entry name" value="Ribosomal Protein S4 Delta 41, Chain A, domain 1"/>
    <property type="match status" value="1"/>
</dbReference>
<dbReference type="Gene3D" id="3.10.290.10">
    <property type="entry name" value="RNA-binding S4 domain"/>
    <property type="match status" value="1"/>
</dbReference>
<dbReference type="HAMAP" id="MF_01306_B">
    <property type="entry name" value="Ribosomal_uS4_B"/>
    <property type="match status" value="1"/>
</dbReference>
<dbReference type="InterPro" id="IPR022801">
    <property type="entry name" value="Ribosomal_uS4"/>
</dbReference>
<dbReference type="InterPro" id="IPR005709">
    <property type="entry name" value="Ribosomal_uS4_bac-type"/>
</dbReference>
<dbReference type="InterPro" id="IPR018079">
    <property type="entry name" value="Ribosomal_uS4_CS"/>
</dbReference>
<dbReference type="InterPro" id="IPR001912">
    <property type="entry name" value="Ribosomal_uS4_N"/>
</dbReference>
<dbReference type="InterPro" id="IPR002942">
    <property type="entry name" value="S4_RNA-bd"/>
</dbReference>
<dbReference type="InterPro" id="IPR036986">
    <property type="entry name" value="S4_RNA-bd_sf"/>
</dbReference>
<dbReference type="NCBIfam" id="NF003717">
    <property type="entry name" value="PRK05327.1"/>
    <property type="match status" value="1"/>
</dbReference>
<dbReference type="NCBIfam" id="TIGR01017">
    <property type="entry name" value="rpsD_bact"/>
    <property type="match status" value="1"/>
</dbReference>
<dbReference type="PANTHER" id="PTHR11831">
    <property type="entry name" value="30S 40S RIBOSOMAL PROTEIN"/>
    <property type="match status" value="1"/>
</dbReference>
<dbReference type="PANTHER" id="PTHR11831:SF4">
    <property type="entry name" value="SMALL RIBOSOMAL SUBUNIT PROTEIN US4M"/>
    <property type="match status" value="1"/>
</dbReference>
<dbReference type="Pfam" id="PF00163">
    <property type="entry name" value="Ribosomal_S4"/>
    <property type="match status" value="1"/>
</dbReference>
<dbReference type="Pfam" id="PF01479">
    <property type="entry name" value="S4"/>
    <property type="match status" value="1"/>
</dbReference>
<dbReference type="SMART" id="SM01390">
    <property type="entry name" value="Ribosomal_S4"/>
    <property type="match status" value="1"/>
</dbReference>
<dbReference type="SMART" id="SM00363">
    <property type="entry name" value="S4"/>
    <property type="match status" value="1"/>
</dbReference>
<dbReference type="SUPFAM" id="SSF55174">
    <property type="entry name" value="Alpha-L RNA-binding motif"/>
    <property type="match status" value="1"/>
</dbReference>
<dbReference type="PROSITE" id="PS00632">
    <property type="entry name" value="RIBOSOMAL_S4"/>
    <property type="match status" value="1"/>
</dbReference>
<dbReference type="PROSITE" id="PS50889">
    <property type="entry name" value="S4"/>
    <property type="match status" value="1"/>
</dbReference>
<keyword id="KW-0687">Ribonucleoprotein</keyword>
<keyword id="KW-0689">Ribosomal protein</keyword>
<keyword id="KW-0694">RNA-binding</keyword>
<keyword id="KW-0699">rRNA-binding</keyword>
<evidence type="ECO:0000255" key="1">
    <source>
        <dbReference type="HAMAP-Rule" id="MF_01306"/>
    </source>
</evidence>
<evidence type="ECO:0000305" key="2"/>
<protein>
    <recommendedName>
        <fullName evidence="1">Small ribosomal subunit protein uS4</fullName>
    </recommendedName>
    <alternativeName>
        <fullName evidence="2">30S ribosomal protein S4</fullName>
    </alternativeName>
</protein>